<name>RUVB1_KLULA</name>
<feature type="chain" id="PRO_0000165656" description="RuvB-like helicase 1">
    <location>
        <begin position="1"/>
        <end position="457"/>
    </location>
</feature>
<feature type="binding site" evidence="1">
    <location>
        <begin position="73"/>
        <end position="80"/>
    </location>
    <ligand>
        <name>ATP</name>
        <dbReference type="ChEBI" id="CHEBI:30616"/>
    </ligand>
</feature>
<protein>
    <recommendedName>
        <fullName>RuvB-like helicase 1</fullName>
        <ecNumber>3.6.4.12</ecNumber>
    </recommendedName>
</protein>
<accession>Q6CQA9</accession>
<organism>
    <name type="scientific">Kluyveromyces lactis (strain ATCC 8585 / CBS 2359 / DSM 70799 / NBRC 1267 / NRRL Y-1140 / WM37)</name>
    <name type="common">Yeast</name>
    <name type="synonym">Candida sphaerica</name>
    <dbReference type="NCBI Taxonomy" id="284590"/>
    <lineage>
        <taxon>Eukaryota</taxon>
        <taxon>Fungi</taxon>
        <taxon>Dikarya</taxon>
        <taxon>Ascomycota</taxon>
        <taxon>Saccharomycotina</taxon>
        <taxon>Saccharomycetes</taxon>
        <taxon>Saccharomycetales</taxon>
        <taxon>Saccharomycetaceae</taxon>
        <taxon>Kluyveromyces</taxon>
    </lineage>
</organism>
<proteinExistence type="inferred from homology"/>
<reference key="1">
    <citation type="journal article" date="2004" name="Nature">
        <title>Genome evolution in yeasts.</title>
        <authorList>
            <person name="Dujon B."/>
            <person name="Sherman D."/>
            <person name="Fischer G."/>
            <person name="Durrens P."/>
            <person name="Casaregola S."/>
            <person name="Lafontaine I."/>
            <person name="de Montigny J."/>
            <person name="Marck C."/>
            <person name="Neuveglise C."/>
            <person name="Talla E."/>
            <person name="Goffard N."/>
            <person name="Frangeul L."/>
            <person name="Aigle M."/>
            <person name="Anthouard V."/>
            <person name="Babour A."/>
            <person name="Barbe V."/>
            <person name="Barnay S."/>
            <person name="Blanchin S."/>
            <person name="Beckerich J.-M."/>
            <person name="Beyne E."/>
            <person name="Bleykasten C."/>
            <person name="Boisrame A."/>
            <person name="Boyer J."/>
            <person name="Cattolico L."/>
            <person name="Confanioleri F."/>
            <person name="de Daruvar A."/>
            <person name="Despons L."/>
            <person name="Fabre E."/>
            <person name="Fairhead C."/>
            <person name="Ferry-Dumazet H."/>
            <person name="Groppi A."/>
            <person name="Hantraye F."/>
            <person name="Hennequin C."/>
            <person name="Jauniaux N."/>
            <person name="Joyet P."/>
            <person name="Kachouri R."/>
            <person name="Kerrest A."/>
            <person name="Koszul R."/>
            <person name="Lemaire M."/>
            <person name="Lesur I."/>
            <person name="Ma L."/>
            <person name="Muller H."/>
            <person name="Nicaud J.-M."/>
            <person name="Nikolski M."/>
            <person name="Oztas S."/>
            <person name="Ozier-Kalogeropoulos O."/>
            <person name="Pellenz S."/>
            <person name="Potier S."/>
            <person name="Richard G.-F."/>
            <person name="Straub M.-L."/>
            <person name="Suleau A."/>
            <person name="Swennen D."/>
            <person name="Tekaia F."/>
            <person name="Wesolowski-Louvel M."/>
            <person name="Westhof E."/>
            <person name="Wirth B."/>
            <person name="Zeniou-Meyer M."/>
            <person name="Zivanovic Y."/>
            <person name="Bolotin-Fukuhara M."/>
            <person name="Thierry A."/>
            <person name="Bouchier C."/>
            <person name="Caudron B."/>
            <person name="Scarpelli C."/>
            <person name="Gaillardin C."/>
            <person name="Weissenbach J."/>
            <person name="Wincker P."/>
            <person name="Souciet J.-L."/>
        </authorList>
    </citation>
    <scope>NUCLEOTIDE SEQUENCE [LARGE SCALE GENOMIC DNA]</scope>
    <source>
        <strain>ATCC 8585 / CBS 2359 / DSM 70799 / NBRC 1267 / NRRL Y-1140 / WM37</strain>
    </source>
</reference>
<sequence length="457" mass="49975">MVQISEVQEQSSTAYTRTAAHTHIKGLGLDEFGVAKQVEGGFVGQAEAREACGVIVDLIKAKKMSGKAILLAGGPSTGKTALALAISQELGPKVPFCPLVGSELYSVEVKKTEALMENFRRAIGLRIKETKEVYEGEVTELTPEEAENPLGGYGKTISHVIVGLKSAKGTKTLRLDPTIYESIQREKVSVGDVIYIESNTGAVKRVGRSDAFATEFDLEAEEYVPLPKGEVHKKKEIVQDVTLHDLDVANARPQGGQDVISMMGQLMKPKKTEITEKLRHEVNKVVAKYIDQGVAELVPGVLFIDEVNMLDIEIFTYLNRALESDIAPVVVLASNRGMITVRGTDDVVSPHGVPPDLIDRLLIVRTLPYNREEIKTIISKRAAVENLQVEDEALEFLATLGTETSLRYVLQLLSPSGIIAKIANRAEISVADVEEAKLLFLDAKRSTKILEQSENYL</sequence>
<evidence type="ECO:0000250" key="1"/>
<evidence type="ECO:0000305" key="2"/>
<comment type="function">
    <text evidence="1">DNA helicase which participates in several chromatin remodeling complexes, including the SWR1 and the INO80 complexes. The SWR1 complex mediates the ATP-dependent exchange of histone H2A for the H2A variant HZT1 leading to transcriptional regulation of selected genes by chromatin remodeling. The INO80 complex remodels chromatin by shifting nucleosomes and is involved in DNA repair. Also involved in pre-rRNA processing (By similarity).</text>
</comment>
<comment type="catalytic activity">
    <reaction>
        <text>ATP + H2O = ADP + phosphate + H(+)</text>
        <dbReference type="Rhea" id="RHEA:13065"/>
        <dbReference type="ChEBI" id="CHEBI:15377"/>
        <dbReference type="ChEBI" id="CHEBI:15378"/>
        <dbReference type="ChEBI" id="CHEBI:30616"/>
        <dbReference type="ChEBI" id="CHEBI:43474"/>
        <dbReference type="ChEBI" id="CHEBI:456216"/>
        <dbReference type="EC" id="3.6.4.12"/>
    </reaction>
</comment>
<comment type="subunit">
    <text evidence="1">May form heterododecamers with RVB2. Component of the SWR1 chromatin remodeling complex, the INO80 chromatin remodeling complex, and of the R2TP complex (By similarity).</text>
</comment>
<comment type="subcellular location">
    <subcellularLocation>
        <location evidence="1">Nucleus</location>
    </subcellularLocation>
</comment>
<comment type="similarity">
    <text evidence="2">Belongs to the RuvB family.</text>
</comment>
<gene>
    <name type="primary">RVB1</name>
    <name type="ordered locus">KLLA0D18502g</name>
</gene>
<keyword id="KW-0010">Activator</keyword>
<keyword id="KW-0067">ATP-binding</keyword>
<keyword id="KW-0156">Chromatin regulator</keyword>
<keyword id="KW-0227">DNA damage</keyword>
<keyword id="KW-0234">DNA repair</keyword>
<keyword id="KW-0347">Helicase</keyword>
<keyword id="KW-0378">Hydrolase</keyword>
<keyword id="KW-0547">Nucleotide-binding</keyword>
<keyword id="KW-0539">Nucleus</keyword>
<keyword id="KW-1185">Reference proteome</keyword>
<keyword id="KW-0804">Transcription</keyword>
<keyword id="KW-0805">Transcription regulation</keyword>
<dbReference type="EC" id="3.6.4.12"/>
<dbReference type="EMBL" id="CR382124">
    <property type="protein sequence ID" value="CAH00976.1"/>
    <property type="molecule type" value="Genomic_DNA"/>
</dbReference>
<dbReference type="RefSeq" id="XP_453880.1">
    <property type="nucleotide sequence ID" value="XM_453880.1"/>
</dbReference>
<dbReference type="SMR" id="Q6CQA9"/>
<dbReference type="FunCoup" id="Q6CQA9">
    <property type="interactions" value="1714"/>
</dbReference>
<dbReference type="STRING" id="284590.Q6CQA9"/>
<dbReference type="PaxDb" id="284590-Q6CQA9"/>
<dbReference type="KEGG" id="kla:KLLA0_D18502g"/>
<dbReference type="eggNOG" id="KOG1942">
    <property type="taxonomic scope" value="Eukaryota"/>
</dbReference>
<dbReference type="HOGENOM" id="CLU_028311_1_1_1"/>
<dbReference type="InParanoid" id="Q6CQA9"/>
<dbReference type="OMA" id="RTLPYNK"/>
<dbReference type="Proteomes" id="UP000000598">
    <property type="component" value="Chromosome D"/>
</dbReference>
<dbReference type="GO" id="GO:0005634">
    <property type="term" value="C:nucleus"/>
    <property type="evidence" value="ECO:0007669"/>
    <property type="project" value="UniProtKB-SubCell"/>
</dbReference>
<dbReference type="GO" id="GO:0005524">
    <property type="term" value="F:ATP binding"/>
    <property type="evidence" value="ECO:0007669"/>
    <property type="project" value="UniProtKB-KW"/>
</dbReference>
<dbReference type="GO" id="GO:0016887">
    <property type="term" value="F:ATP hydrolysis activity"/>
    <property type="evidence" value="ECO:0007669"/>
    <property type="project" value="InterPro"/>
</dbReference>
<dbReference type="GO" id="GO:0008094">
    <property type="term" value="F:ATP-dependent activity, acting on DNA"/>
    <property type="evidence" value="ECO:0007669"/>
    <property type="project" value="InterPro"/>
</dbReference>
<dbReference type="GO" id="GO:0004386">
    <property type="term" value="F:helicase activity"/>
    <property type="evidence" value="ECO:0007669"/>
    <property type="project" value="UniProtKB-KW"/>
</dbReference>
<dbReference type="GO" id="GO:0006325">
    <property type="term" value="P:chromatin organization"/>
    <property type="evidence" value="ECO:0007669"/>
    <property type="project" value="UniProtKB-KW"/>
</dbReference>
<dbReference type="GO" id="GO:0006281">
    <property type="term" value="P:DNA repair"/>
    <property type="evidence" value="ECO:0007669"/>
    <property type="project" value="UniProtKB-KW"/>
</dbReference>
<dbReference type="FunFam" id="1.10.8.60:FF:000010">
    <property type="entry name" value="RuvB-like helicase"/>
    <property type="match status" value="1"/>
</dbReference>
<dbReference type="FunFam" id="2.40.50.360:FF:000001">
    <property type="entry name" value="RuvB-like helicase"/>
    <property type="match status" value="1"/>
</dbReference>
<dbReference type="Gene3D" id="1.10.8.60">
    <property type="match status" value="1"/>
</dbReference>
<dbReference type="Gene3D" id="3.40.50.300">
    <property type="entry name" value="P-loop containing nucleotide triphosphate hydrolases"/>
    <property type="match status" value="1"/>
</dbReference>
<dbReference type="Gene3D" id="2.40.50.360">
    <property type="entry name" value="RuvB-like helicase, domain II"/>
    <property type="match status" value="1"/>
</dbReference>
<dbReference type="InterPro" id="IPR003593">
    <property type="entry name" value="AAA+_ATPase"/>
</dbReference>
<dbReference type="InterPro" id="IPR027417">
    <property type="entry name" value="P-loop_NTPase"/>
</dbReference>
<dbReference type="InterPro" id="IPR027238">
    <property type="entry name" value="RuvB-like"/>
</dbReference>
<dbReference type="InterPro" id="IPR041048">
    <property type="entry name" value="RuvB-like_C"/>
</dbReference>
<dbReference type="InterPro" id="IPR042487">
    <property type="entry name" value="RuvBL1/2_DNA/RNA_bd_dom"/>
</dbReference>
<dbReference type="InterPro" id="IPR010339">
    <property type="entry name" value="TIP49_P-loop"/>
</dbReference>
<dbReference type="PANTHER" id="PTHR11093">
    <property type="entry name" value="RUVB-RELATED REPTIN AND PONTIN"/>
    <property type="match status" value="1"/>
</dbReference>
<dbReference type="Pfam" id="PF06068">
    <property type="entry name" value="TIP49"/>
    <property type="match status" value="1"/>
</dbReference>
<dbReference type="Pfam" id="PF17856">
    <property type="entry name" value="TIP49_C"/>
    <property type="match status" value="1"/>
</dbReference>
<dbReference type="SMART" id="SM00382">
    <property type="entry name" value="AAA"/>
    <property type="match status" value="1"/>
</dbReference>
<dbReference type="SUPFAM" id="SSF52540">
    <property type="entry name" value="P-loop containing nucleoside triphosphate hydrolases"/>
    <property type="match status" value="1"/>
</dbReference>